<reference key="1">
    <citation type="submission" date="2007-08" db="EMBL/GenBank/DDBJ databases">
        <title>Complete sequence of Shewanella sediminis HAW-EB3.</title>
        <authorList>
            <consortium name="US DOE Joint Genome Institute"/>
            <person name="Copeland A."/>
            <person name="Lucas S."/>
            <person name="Lapidus A."/>
            <person name="Barry K."/>
            <person name="Glavina del Rio T."/>
            <person name="Dalin E."/>
            <person name="Tice H."/>
            <person name="Pitluck S."/>
            <person name="Chertkov O."/>
            <person name="Brettin T."/>
            <person name="Bruce D."/>
            <person name="Detter J.C."/>
            <person name="Han C."/>
            <person name="Schmutz J."/>
            <person name="Larimer F."/>
            <person name="Land M."/>
            <person name="Hauser L."/>
            <person name="Kyrpides N."/>
            <person name="Kim E."/>
            <person name="Zhao J.-S."/>
            <person name="Richardson P."/>
        </authorList>
    </citation>
    <scope>NUCLEOTIDE SEQUENCE [LARGE SCALE GENOMIC DNA]</scope>
    <source>
        <strain>HAW-EB3</strain>
    </source>
</reference>
<protein>
    <recommendedName>
        <fullName evidence="1">3-dehydroquinate dehydratase</fullName>
        <shortName evidence="1">3-dehydroquinase</shortName>
        <ecNumber evidence="1">4.2.1.10</ecNumber>
    </recommendedName>
    <alternativeName>
        <fullName evidence="1">Type II DHQase</fullName>
    </alternativeName>
</protein>
<organism>
    <name type="scientific">Shewanella sediminis (strain HAW-EB3)</name>
    <dbReference type="NCBI Taxonomy" id="425104"/>
    <lineage>
        <taxon>Bacteria</taxon>
        <taxon>Pseudomonadati</taxon>
        <taxon>Pseudomonadota</taxon>
        <taxon>Gammaproteobacteria</taxon>
        <taxon>Alteromonadales</taxon>
        <taxon>Shewanellaceae</taxon>
        <taxon>Shewanella</taxon>
    </lineage>
</organism>
<sequence>MGGKAKILLVNGPNLNLLGRREPGHYGHHTLDQIVKELQDESTSSGVVLEHIQSNAEHELIDAIHATEAEFIIINPAAFTHTSVALRDAILGVSIPFIEVHLSNVHAREPFRHHSYFSDKAVGVICGLGAQGYQFALQSAISRLKAKSAEH</sequence>
<gene>
    <name evidence="1" type="primary">aroQ</name>
    <name type="ordered locus">Ssed_4088</name>
</gene>
<evidence type="ECO:0000255" key="1">
    <source>
        <dbReference type="HAMAP-Rule" id="MF_00169"/>
    </source>
</evidence>
<accession>A8G0R9</accession>
<dbReference type="EC" id="4.2.1.10" evidence="1"/>
<dbReference type="EMBL" id="CP000821">
    <property type="protein sequence ID" value="ABV38692.1"/>
    <property type="molecule type" value="Genomic_DNA"/>
</dbReference>
<dbReference type="RefSeq" id="WP_012144422.1">
    <property type="nucleotide sequence ID" value="NC_009831.1"/>
</dbReference>
<dbReference type="SMR" id="A8G0R9"/>
<dbReference type="STRING" id="425104.Ssed_4088"/>
<dbReference type="KEGG" id="sse:Ssed_4088"/>
<dbReference type="eggNOG" id="COG0757">
    <property type="taxonomic scope" value="Bacteria"/>
</dbReference>
<dbReference type="HOGENOM" id="CLU_090968_1_0_6"/>
<dbReference type="OrthoDB" id="9790793at2"/>
<dbReference type="UniPathway" id="UPA00053">
    <property type="reaction ID" value="UER00086"/>
</dbReference>
<dbReference type="Proteomes" id="UP000002015">
    <property type="component" value="Chromosome"/>
</dbReference>
<dbReference type="GO" id="GO:0003855">
    <property type="term" value="F:3-dehydroquinate dehydratase activity"/>
    <property type="evidence" value="ECO:0007669"/>
    <property type="project" value="UniProtKB-UniRule"/>
</dbReference>
<dbReference type="GO" id="GO:0008652">
    <property type="term" value="P:amino acid biosynthetic process"/>
    <property type="evidence" value="ECO:0007669"/>
    <property type="project" value="UniProtKB-KW"/>
</dbReference>
<dbReference type="GO" id="GO:0009073">
    <property type="term" value="P:aromatic amino acid family biosynthetic process"/>
    <property type="evidence" value="ECO:0007669"/>
    <property type="project" value="UniProtKB-KW"/>
</dbReference>
<dbReference type="GO" id="GO:0009423">
    <property type="term" value="P:chorismate biosynthetic process"/>
    <property type="evidence" value="ECO:0007669"/>
    <property type="project" value="UniProtKB-UniRule"/>
</dbReference>
<dbReference type="GO" id="GO:0019631">
    <property type="term" value="P:quinate catabolic process"/>
    <property type="evidence" value="ECO:0007669"/>
    <property type="project" value="TreeGrafter"/>
</dbReference>
<dbReference type="CDD" id="cd00466">
    <property type="entry name" value="DHQase_II"/>
    <property type="match status" value="1"/>
</dbReference>
<dbReference type="Gene3D" id="3.40.50.9100">
    <property type="entry name" value="Dehydroquinase, class II"/>
    <property type="match status" value="1"/>
</dbReference>
<dbReference type="HAMAP" id="MF_00169">
    <property type="entry name" value="AroQ"/>
    <property type="match status" value="1"/>
</dbReference>
<dbReference type="InterPro" id="IPR001874">
    <property type="entry name" value="DHquinase_II"/>
</dbReference>
<dbReference type="InterPro" id="IPR018509">
    <property type="entry name" value="DHquinase_II_CS"/>
</dbReference>
<dbReference type="InterPro" id="IPR036441">
    <property type="entry name" value="DHquinase_II_sf"/>
</dbReference>
<dbReference type="NCBIfam" id="TIGR01088">
    <property type="entry name" value="aroQ"/>
    <property type="match status" value="1"/>
</dbReference>
<dbReference type="NCBIfam" id="NF003804">
    <property type="entry name" value="PRK05395.1-1"/>
    <property type="match status" value="1"/>
</dbReference>
<dbReference type="NCBIfam" id="NF003805">
    <property type="entry name" value="PRK05395.1-2"/>
    <property type="match status" value="1"/>
</dbReference>
<dbReference type="NCBIfam" id="NF003806">
    <property type="entry name" value="PRK05395.1-3"/>
    <property type="match status" value="1"/>
</dbReference>
<dbReference type="NCBIfam" id="NF003807">
    <property type="entry name" value="PRK05395.1-4"/>
    <property type="match status" value="1"/>
</dbReference>
<dbReference type="PANTHER" id="PTHR21272">
    <property type="entry name" value="CATABOLIC 3-DEHYDROQUINASE"/>
    <property type="match status" value="1"/>
</dbReference>
<dbReference type="PANTHER" id="PTHR21272:SF3">
    <property type="entry name" value="CATABOLIC 3-DEHYDROQUINASE"/>
    <property type="match status" value="1"/>
</dbReference>
<dbReference type="Pfam" id="PF01220">
    <property type="entry name" value="DHquinase_II"/>
    <property type="match status" value="1"/>
</dbReference>
<dbReference type="PIRSF" id="PIRSF001399">
    <property type="entry name" value="DHquinase_II"/>
    <property type="match status" value="1"/>
</dbReference>
<dbReference type="SUPFAM" id="SSF52304">
    <property type="entry name" value="Type II 3-dehydroquinate dehydratase"/>
    <property type="match status" value="1"/>
</dbReference>
<dbReference type="PROSITE" id="PS01029">
    <property type="entry name" value="DEHYDROQUINASE_II"/>
    <property type="match status" value="1"/>
</dbReference>
<keyword id="KW-0028">Amino-acid biosynthesis</keyword>
<keyword id="KW-0057">Aromatic amino acid biosynthesis</keyword>
<keyword id="KW-0456">Lyase</keyword>
<keyword id="KW-1185">Reference proteome</keyword>
<comment type="function">
    <text evidence="1">Catalyzes a trans-dehydration via an enolate intermediate.</text>
</comment>
<comment type="catalytic activity">
    <reaction evidence="1">
        <text>3-dehydroquinate = 3-dehydroshikimate + H2O</text>
        <dbReference type="Rhea" id="RHEA:21096"/>
        <dbReference type="ChEBI" id="CHEBI:15377"/>
        <dbReference type="ChEBI" id="CHEBI:16630"/>
        <dbReference type="ChEBI" id="CHEBI:32364"/>
        <dbReference type="EC" id="4.2.1.10"/>
    </reaction>
</comment>
<comment type="pathway">
    <text evidence="1">Metabolic intermediate biosynthesis; chorismate biosynthesis; chorismate from D-erythrose 4-phosphate and phosphoenolpyruvate: step 3/7.</text>
</comment>
<comment type="subunit">
    <text evidence="1">Homododecamer.</text>
</comment>
<comment type="similarity">
    <text evidence="1">Belongs to the type-II 3-dehydroquinase family.</text>
</comment>
<name>AROQ_SHESH</name>
<feature type="chain" id="PRO_1000097623" description="3-dehydroquinate dehydratase">
    <location>
        <begin position="1"/>
        <end position="151"/>
    </location>
</feature>
<feature type="active site" description="Proton acceptor" evidence="1">
    <location>
        <position position="26"/>
    </location>
</feature>
<feature type="active site" description="Proton donor" evidence="1">
    <location>
        <position position="101"/>
    </location>
</feature>
<feature type="binding site" evidence="1">
    <location>
        <position position="75"/>
    </location>
    <ligand>
        <name>substrate</name>
    </ligand>
</feature>
<feature type="binding site" evidence="1">
    <location>
        <position position="81"/>
    </location>
    <ligand>
        <name>substrate</name>
    </ligand>
</feature>
<feature type="binding site" evidence="1">
    <location>
        <position position="88"/>
    </location>
    <ligand>
        <name>substrate</name>
    </ligand>
</feature>
<feature type="binding site" evidence="1">
    <location>
        <begin position="102"/>
        <end position="103"/>
    </location>
    <ligand>
        <name>substrate</name>
    </ligand>
</feature>
<feature type="binding site" evidence="1">
    <location>
        <position position="112"/>
    </location>
    <ligand>
        <name>substrate</name>
    </ligand>
</feature>
<feature type="site" description="Transition state stabilizer" evidence="1">
    <location>
        <position position="21"/>
    </location>
</feature>
<proteinExistence type="inferred from homology"/>